<sequence length="64" mass="7187">MLILTRRIGETLIIGDDVNITVLGVKGNQVRLGINAPKDVSVHREEIYLRIQQEKESDDSEQAV</sequence>
<name>CSRA_LEGPA</name>
<evidence type="ECO:0000255" key="1">
    <source>
        <dbReference type="HAMAP-Rule" id="MF_00167"/>
    </source>
</evidence>
<accession>Q5X6W9</accession>
<feature type="chain" id="PRO_1000023393" description="Translational regulator CsrA">
    <location>
        <begin position="1"/>
        <end position="64"/>
    </location>
</feature>
<protein>
    <recommendedName>
        <fullName evidence="1">Translational regulator CsrA</fullName>
    </recommendedName>
    <alternativeName>
        <fullName evidence="1">Carbon storage regulator</fullName>
    </alternativeName>
</protein>
<proteinExistence type="inferred from homology"/>
<gene>
    <name evidence="1" type="primary">csrA</name>
    <name type="ordered locus">lpp0845</name>
</gene>
<reference key="1">
    <citation type="journal article" date="2004" name="Nat. Genet.">
        <title>Evidence in the Legionella pneumophila genome for exploitation of host cell functions and high genome plasticity.</title>
        <authorList>
            <person name="Cazalet C."/>
            <person name="Rusniok C."/>
            <person name="Brueggemann H."/>
            <person name="Zidane N."/>
            <person name="Magnier A."/>
            <person name="Ma L."/>
            <person name="Tichit M."/>
            <person name="Jarraud S."/>
            <person name="Bouchier C."/>
            <person name="Vandenesch F."/>
            <person name="Kunst F."/>
            <person name="Etienne J."/>
            <person name="Glaser P."/>
            <person name="Buchrieser C."/>
        </authorList>
    </citation>
    <scope>NUCLEOTIDE SEQUENCE [LARGE SCALE GENOMIC DNA]</scope>
    <source>
        <strain>Paris</strain>
    </source>
</reference>
<keyword id="KW-0010">Activator</keyword>
<keyword id="KW-0963">Cytoplasm</keyword>
<keyword id="KW-0678">Repressor</keyword>
<keyword id="KW-0694">RNA-binding</keyword>
<keyword id="KW-0810">Translation regulation</keyword>
<comment type="function">
    <text evidence="1">A key translational regulator that binds mRNA to regulate translation initiation and/or mRNA stability. Mediates global changes in gene expression, shifting from rapid growth to stress survival by linking envelope stress, the stringent response and the catabolite repression systems. Usually binds in the 5'-UTR; binding at or near the Shine-Dalgarno sequence prevents ribosome-binding, repressing translation, binding elsewhere in the 5'-UTR can activate translation and/or stabilize the mRNA. Its function is antagonized by small RNA(s).</text>
</comment>
<comment type="subunit">
    <text evidence="1">Homodimer; the beta-strands of each monomer intercalate to form a hydrophobic core, while the alpha-helices form wings that extend away from the core.</text>
</comment>
<comment type="subcellular location">
    <subcellularLocation>
        <location evidence="1">Cytoplasm</location>
    </subcellularLocation>
</comment>
<comment type="similarity">
    <text evidence="1">Belongs to the CsrA/RsmA family.</text>
</comment>
<organism>
    <name type="scientific">Legionella pneumophila (strain Paris)</name>
    <dbReference type="NCBI Taxonomy" id="297246"/>
    <lineage>
        <taxon>Bacteria</taxon>
        <taxon>Pseudomonadati</taxon>
        <taxon>Pseudomonadota</taxon>
        <taxon>Gammaproteobacteria</taxon>
        <taxon>Legionellales</taxon>
        <taxon>Legionellaceae</taxon>
        <taxon>Legionella</taxon>
    </lineage>
</organism>
<dbReference type="EMBL" id="CR628336">
    <property type="protein sequence ID" value="CAH11995.1"/>
    <property type="molecule type" value="Genomic_DNA"/>
</dbReference>
<dbReference type="RefSeq" id="WP_011213314.1">
    <property type="nucleotide sequence ID" value="NC_006368.1"/>
</dbReference>
<dbReference type="SMR" id="Q5X6W9"/>
<dbReference type="GeneID" id="57034771"/>
<dbReference type="KEGG" id="lpp:lpp0845"/>
<dbReference type="LegioList" id="lpp0845"/>
<dbReference type="HOGENOM" id="CLU_164837_2_1_6"/>
<dbReference type="GO" id="GO:0005829">
    <property type="term" value="C:cytosol"/>
    <property type="evidence" value="ECO:0007669"/>
    <property type="project" value="TreeGrafter"/>
</dbReference>
<dbReference type="GO" id="GO:0048027">
    <property type="term" value="F:mRNA 5'-UTR binding"/>
    <property type="evidence" value="ECO:0007669"/>
    <property type="project" value="UniProtKB-UniRule"/>
</dbReference>
<dbReference type="GO" id="GO:0006402">
    <property type="term" value="P:mRNA catabolic process"/>
    <property type="evidence" value="ECO:0007669"/>
    <property type="project" value="InterPro"/>
</dbReference>
<dbReference type="GO" id="GO:0045947">
    <property type="term" value="P:negative regulation of translational initiation"/>
    <property type="evidence" value="ECO:0007669"/>
    <property type="project" value="UniProtKB-UniRule"/>
</dbReference>
<dbReference type="GO" id="GO:0045948">
    <property type="term" value="P:positive regulation of translational initiation"/>
    <property type="evidence" value="ECO:0007669"/>
    <property type="project" value="UniProtKB-UniRule"/>
</dbReference>
<dbReference type="GO" id="GO:0006109">
    <property type="term" value="P:regulation of carbohydrate metabolic process"/>
    <property type="evidence" value="ECO:0007669"/>
    <property type="project" value="UniProtKB-UniRule"/>
</dbReference>
<dbReference type="FunFam" id="2.60.40.4380:FF:000001">
    <property type="entry name" value="Translational regulator CsrA"/>
    <property type="match status" value="1"/>
</dbReference>
<dbReference type="Gene3D" id="2.60.40.4380">
    <property type="entry name" value="Translational regulator CsrA"/>
    <property type="match status" value="1"/>
</dbReference>
<dbReference type="HAMAP" id="MF_00167">
    <property type="entry name" value="CsrA"/>
    <property type="match status" value="1"/>
</dbReference>
<dbReference type="InterPro" id="IPR003751">
    <property type="entry name" value="CsrA"/>
</dbReference>
<dbReference type="InterPro" id="IPR036107">
    <property type="entry name" value="CsrA_sf"/>
</dbReference>
<dbReference type="NCBIfam" id="TIGR00202">
    <property type="entry name" value="csrA"/>
    <property type="match status" value="1"/>
</dbReference>
<dbReference type="NCBIfam" id="NF002469">
    <property type="entry name" value="PRK01712.1"/>
    <property type="match status" value="1"/>
</dbReference>
<dbReference type="PANTHER" id="PTHR34984">
    <property type="entry name" value="CARBON STORAGE REGULATOR"/>
    <property type="match status" value="1"/>
</dbReference>
<dbReference type="PANTHER" id="PTHR34984:SF1">
    <property type="entry name" value="CARBON STORAGE REGULATOR"/>
    <property type="match status" value="1"/>
</dbReference>
<dbReference type="Pfam" id="PF02599">
    <property type="entry name" value="CsrA"/>
    <property type="match status" value="1"/>
</dbReference>
<dbReference type="SUPFAM" id="SSF117130">
    <property type="entry name" value="CsrA-like"/>
    <property type="match status" value="1"/>
</dbReference>